<gene>
    <name evidence="1" type="primary">hemE</name>
    <name type="ordered locus">tlr0741</name>
</gene>
<comment type="function">
    <text evidence="1">Catalyzes the decarboxylation of four acetate groups of uroporphyrinogen-III to yield coproporphyrinogen-III.</text>
</comment>
<comment type="catalytic activity">
    <reaction evidence="1">
        <text>uroporphyrinogen III + 4 H(+) = coproporphyrinogen III + 4 CO2</text>
        <dbReference type="Rhea" id="RHEA:19865"/>
        <dbReference type="ChEBI" id="CHEBI:15378"/>
        <dbReference type="ChEBI" id="CHEBI:16526"/>
        <dbReference type="ChEBI" id="CHEBI:57308"/>
        <dbReference type="ChEBI" id="CHEBI:57309"/>
        <dbReference type="EC" id="4.1.1.37"/>
    </reaction>
</comment>
<comment type="pathway">
    <text evidence="1">Porphyrin-containing compound metabolism; protoporphyrin-IX biosynthesis; coproporphyrinogen-III from 5-aminolevulinate: step 4/4.</text>
</comment>
<comment type="subunit">
    <text evidence="1">Homodimer.</text>
</comment>
<comment type="subcellular location">
    <subcellularLocation>
        <location evidence="1">Cytoplasm</location>
    </subcellularLocation>
</comment>
<comment type="similarity">
    <text evidence="1">Belongs to the uroporphyrinogen decarboxylase family.</text>
</comment>
<protein>
    <recommendedName>
        <fullName evidence="1">Uroporphyrinogen decarboxylase</fullName>
        <shortName evidence="1">UPD</shortName>
        <shortName evidence="1">URO-D</shortName>
        <ecNumber evidence="1">4.1.1.37</ecNumber>
    </recommendedName>
</protein>
<accession>Q8DKW0</accession>
<feature type="chain" id="PRO_0000187649" description="Uroporphyrinogen decarboxylase">
    <location>
        <begin position="1"/>
        <end position="343"/>
    </location>
</feature>
<feature type="binding site" evidence="1">
    <location>
        <begin position="24"/>
        <end position="28"/>
    </location>
    <ligand>
        <name>substrate</name>
    </ligand>
</feature>
<feature type="binding site" evidence="1">
    <location>
        <position position="43"/>
    </location>
    <ligand>
        <name>substrate</name>
    </ligand>
</feature>
<feature type="binding site" evidence="1">
    <location>
        <position position="74"/>
    </location>
    <ligand>
        <name>substrate</name>
    </ligand>
</feature>
<feature type="binding site" evidence="1">
    <location>
        <position position="151"/>
    </location>
    <ligand>
        <name>substrate</name>
    </ligand>
</feature>
<feature type="binding site" evidence="1">
    <location>
        <position position="206"/>
    </location>
    <ligand>
        <name>substrate</name>
    </ligand>
</feature>
<feature type="binding site" evidence="1">
    <location>
        <position position="321"/>
    </location>
    <ligand>
        <name>substrate</name>
    </ligand>
</feature>
<feature type="site" description="Transition state stabilizer" evidence="1">
    <location>
        <position position="74"/>
    </location>
</feature>
<dbReference type="EC" id="4.1.1.37" evidence="1"/>
<dbReference type="EMBL" id="BA000039">
    <property type="protein sequence ID" value="BAC08292.1"/>
    <property type="molecule type" value="Genomic_DNA"/>
</dbReference>
<dbReference type="RefSeq" id="NP_681530.1">
    <property type="nucleotide sequence ID" value="NC_004113.1"/>
</dbReference>
<dbReference type="RefSeq" id="WP_011056588.1">
    <property type="nucleotide sequence ID" value="NC_004113.1"/>
</dbReference>
<dbReference type="SMR" id="Q8DKW0"/>
<dbReference type="STRING" id="197221.gene:10747331"/>
<dbReference type="EnsemblBacteria" id="BAC08292">
    <property type="protein sequence ID" value="BAC08292"/>
    <property type="gene ID" value="BAC08292"/>
</dbReference>
<dbReference type="KEGG" id="tel:tlr0741"/>
<dbReference type="PATRIC" id="fig|197221.4.peg.781"/>
<dbReference type="eggNOG" id="COG0407">
    <property type="taxonomic scope" value="Bacteria"/>
</dbReference>
<dbReference type="UniPathway" id="UPA00251">
    <property type="reaction ID" value="UER00321"/>
</dbReference>
<dbReference type="Proteomes" id="UP000000440">
    <property type="component" value="Chromosome"/>
</dbReference>
<dbReference type="GO" id="GO:0005737">
    <property type="term" value="C:cytoplasm"/>
    <property type="evidence" value="ECO:0007669"/>
    <property type="project" value="UniProtKB-SubCell"/>
</dbReference>
<dbReference type="GO" id="GO:0004853">
    <property type="term" value="F:uroporphyrinogen decarboxylase activity"/>
    <property type="evidence" value="ECO:0007669"/>
    <property type="project" value="UniProtKB-UniRule"/>
</dbReference>
<dbReference type="GO" id="GO:0006782">
    <property type="term" value="P:protoporphyrinogen IX biosynthetic process"/>
    <property type="evidence" value="ECO:0007669"/>
    <property type="project" value="UniProtKB-UniRule"/>
</dbReference>
<dbReference type="CDD" id="cd00717">
    <property type="entry name" value="URO-D"/>
    <property type="match status" value="1"/>
</dbReference>
<dbReference type="FunFam" id="3.20.20.210:FF:000006">
    <property type="entry name" value="Uroporphyrinogen decarboxylase"/>
    <property type="match status" value="1"/>
</dbReference>
<dbReference type="Gene3D" id="3.20.20.210">
    <property type="match status" value="1"/>
</dbReference>
<dbReference type="HAMAP" id="MF_00218">
    <property type="entry name" value="URO_D"/>
    <property type="match status" value="1"/>
</dbReference>
<dbReference type="InterPro" id="IPR038071">
    <property type="entry name" value="UROD/MetE-like_sf"/>
</dbReference>
<dbReference type="InterPro" id="IPR006361">
    <property type="entry name" value="Uroporphyrinogen_deCO2ase_HemE"/>
</dbReference>
<dbReference type="InterPro" id="IPR000257">
    <property type="entry name" value="Uroporphyrinogen_deCOase"/>
</dbReference>
<dbReference type="NCBIfam" id="TIGR01464">
    <property type="entry name" value="hemE"/>
    <property type="match status" value="1"/>
</dbReference>
<dbReference type="PANTHER" id="PTHR21091">
    <property type="entry name" value="METHYLTETRAHYDROFOLATE:HOMOCYSTEINE METHYLTRANSFERASE RELATED"/>
    <property type="match status" value="1"/>
</dbReference>
<dbReference type="PANTHER" id="PTHR21091:SF169">
    <property type="entry name" value="UROPORPHYRINOGEN DECARBOXYLASE"/>
    <property type="match status" value="1"/>
</dbReference>
<dbReference type="Pfam" id="PF01208">
    <property type="entry name" value="URO-D"/>
    <property type="match status" value="1"/>
</dbReference>
<dbReference type="SUPFAM" id="SSF51726">
    <property type="entry name" value="UROD/MetE-like"/>
    <property type="match status" value="1"/>
</dbReference>
<dbReference type="PROSITE" id="PS00906">
    <property type="entry name" value="UROD_1"/>
    <property type="match status" value="1"/>
</dbReference>
<dbReference type="PROSITE" id="PS00907">
    <property type="entry name" value="UROD_2"/>
    <property type="match status" value="1"/>
</dbReference>
<keyword id="KW-0963">Cytoplasm</keyword>
<keyword id="KW-0210">Decarboxylase</keyword>
<keyword id="KW-0456">Lyase</keyword>
<keyword id="KW-0627">Porphyrin biosynthesis</keyword>
<keyword id="KW-1185">Reference proteome</keyword>
<organism>
    <name type="scientific">Thermosynechococcus vestitus (strain NIES-2133 / IAM M-273 / BP-1)</name>
    <dbReference type="NCBI Taxonomy" id="197221"/>
    <lineage>
        <taxon>Bacteria</taxon>
        <taxon>Bacillati</taxon>
        <taxon>Cyanobacteriota</taxon>
        <taxon>Cyanophyceae</taxon>
        <taxon>Acaryochloridales</taxon>
        <taxon>Thermosynechococcaceae</taxon>
        <taxon>Thermosynechococcus</taxon>
    </lineage>
</organism>
<evidence type="ECO:0000255" key="1">
    <source>
        <dbReference type="HAMAP-Rule" id="MF_00218"/>
    </source>
</evidence>
<name>DCUP_THEVB</name>
<reference key="1">
    <citation type="journal article" date="2002" name="DNA Res.">
        <title>Complete genome structure of the thermophilic cyanobacterium Thermosynechococcus elongatus BP-1.</title>
        <authorList>
            <person name="Nakamura Y."/>
            <person name="Kaneko T."/>
            <person name="Sato S."/>
            <person name="Ikeuchi M."/>
            <person name="Katoh H."/>
            <person name="Sasamoto S."/>
            <person name="Watanabe A."/>
            <person name="Iriguchi M."/>
            <person name="Kawashima K."/>
            <person name="Kimura T."/>
            <person name="Kishida Y."/>
            <person name="Kiyokawa C."/>
            <person name="Kohara M."/>
            <person name="Matsumoto M."/>
            <person name="Matsuno A."/>
            <person name="Nakazaki N."/>
            <person name="Shimpo S."/>
            <person name="Sugimoto M."/>
            <person name="Takeuchi C."/>
            <person name="Yamada M."/>
            <person name="Tabata S."/>
        </authorList>
    </citation>
    <scope>NUCLEOTIDE SEQUENCE [LARGE SCALE GENOMIC DNA]</scope>
    <source>
        <strain>NIES-2133 / IAM M-273 / BP-1</strain>
    </source>
</reference>
<sequence length="343" mass="38327">MTTPLLLRAARGESVERPPIWLMRQAGRYMKVYRDLRDRYPSFRQRSEIPELAIEISLQPFRAFAPDGVILFSDILTPLPGIGIPFDIVESKGPIIDPPIRTLEQVQHLHPLEPEAACPFIRPILATLRQEVGDRAAVLGFAGAPWTLAAYAIEGKSSKDYIQIKTMAYREPDLLHKFLNHLATAIADYLCYQIDCGAQVVQLFDSWAGQLSRQDYDTFAFPYQKQVIQQVKAVYPDVPIILYINGSAAIVDRMAATGVDIVSLDWTVDLGTIRQQFPPSVGLQGNLDPVILFAPQPVLKERSLAIIEAGRKGKYIFNLGHGVLQGTPEENVAFLFDWVKSLA</sequence>
<proteinExistence type="inferred from homology"/>